<feature type="chain" id="PRO_1000068454" description="Glutathione-regulated potassium-efflux system protein KefB">
    <location>
        <begin position="1"/>
        <end position="601"/>
    </location>
</feature>
<feature type="transmembrane region" description="Helical" evidence="1">
    <location>
        <begin position="4"/>
        <end position="24"/>
    </location>
</feature>
<feature type="transmembrane region" description="Helical" evidence="1">
    <location>
        <begin position="29"/>
        <end position="49"/>
    </location>
</feature>
<feature type="transmembrane region" description="Helical" evidence="1">
    <location>
        <begin position="55"/>
        <end position="75"/>
    </location>
</feature>
<feature type="transmembrane region" description="Helical" evidence="1">
    <location>
        <begin position="87"/>
        <end position="107"/>
    </location>
</feature>
<feature type="transmembrane region" description="Helical" evidence="1">
    <location>
        <begin position="115"/>
        <end position="135"/>
    </location>
</feature>
<feature type="transmembrane region" description="Helical" evidence="1">
    <location>
        <begin position="152"/>
        <end position="172"/>
    </location>
</feature>
<feature type="transmembrane region" description="Helical" evidence="1">
    <location>
        <begin position="177"/>
        <end position="197"/>
    </location>
</feature>
<feature type="transmembrane region" description="Helical" evidence="1">
    <location>
        <begin position="207"/>
        <end position="227"/>
    </location>
</feature>
<feature type="transmembrane region" description="Helical" evidence="1">
    <location>
        <begin position="230"/>
        <end position="250"/>
    </location>
</feature>
<feature type="transmembrane region" description="Helical" evidence="1">
    <location>
        <begin position="268"/>
        <end position="288"/>
    </location>
</feature>
<feature type="transmembrane region" description="Helical" evidence="1">
    <location>
        <begin position="291"/>
        <end position="311"/>
    </location>
</feature>
<feature type="transmembrane region" description="Helical" evidence="1">
    <location>
        <begin position="324"/>
        <end position="344"/>
    </location>
</feature>
<feature type="transmembrane region" description="Helical" evidence="1">
    <location>
        <begin position="356"/>
        <end position="376"/>
    </location>
</feature>
<feature type="domain" description="RCK N-terminal" evidence="2">
    <location>
        <begin position="400"/>
        <end position="519"/>
    </location>
</feature>
<comment type="function">
    <text evidence="1">Pore-forming subunit of a potassium efflux system that confers protection against electrophiles. Catalyzes K(+)/H(+) antiport.</text>
</comment>
<comment type="subunit">
    <text evidence="1">Interacts with the regulatory subunit KefG.</text>
</comment>
<comment type="subcellular location">
    <subcellularLocation>
        <location evidence="1">Cell inner membrane</location>
        <topology evidence="1">Multi-pass membrane protein</topology>
    </subcellularLocation>
</comment>
<comment type="similarity">
    <text evidence="1">Belongs to the monovalent cation:proton antiporter 2 (CPA2) transporter (TC 2.A.37) family. KefB subfamily.</text>
</comment>
<evidence type="ECO:0000255" key="1">
    <source>
        <dbReference type="HAMAP-Rule" id="MF_01412"/>
    </source>
</evidence>
<evidence type="ECO:0000255" key="2">
    <source>
        <dbReference type="PROSITE-ProRule" id="PRU00543"/>
    </source>
</evidence>
<dbReference type="EMBL" id="CP000800">
    <property type="protein sequence ID" value="ABV16918.1"/>
    <property type="molecule type" value="Genomic_DNA"/>
</dbReference>
<dbReference type="RefSeq" id="WP_000399129.1">
    <property type="nucleotide sequence ID" value="NC_009801.1"/>
</dbReference>
<dbReference type="SMR" id="A7ZSM6"/>
<dbReference type="KEGG" id="ecw:EcE24377A_3820"/>
<dbReference type="HOGENOM" id="CLU_005126_9_3_6"/>
<dbReference type="Proteomes" id="UP000001122">
    <property type="component" value="Chromosome"/>
</dbReference>
<dbReference type="GO" id="GO:0005886">
    <property type="term" value="C:plasma membrane"/>
    <property type="evidence" value="ECO:0007669"/>
    <property type="project" value="UniProtKB-SubCell"/>
</dbReference>
<dbReference type="GO" id="GO:0015503">
    <property type="term" value="F:glutathione-regulated potassium exporter activity"/>
    <property type="evidence" value="ECO:0007669"/>
    <property type="project" value="UniProtKB-UniRule"/>
</dbReference>
<dbReference type="GO" id="GO:1902600">
    <property type="term" value="P:proton transmembrane transport"/>
    <property type="evidence" value="ECO:0007669"/>
    <property type="project" value="InterPro"/>
</dbReference>
<dbReference type="FunFam" id="1.20.1530.20:FF:000001">
    <property type="entry name" value="Glutathione-regulated potassium-efflux system protein KefB"/>
    <property type="match status" value="1"/>
</dbReference>
<dbReference type="FunFam" id="3.40.50.720:FF:000036">
    <property type="entry name" value="Glutathione-regulated potassium-efflux system protein KefB"/>
    <property type="match status" value="1"/>
</dbReference>
<dbReference type="Gene3D" id="1.20.1530.20">
    <property type="match status" value="1"/>
</dbReference>
<dbReference type="Gene3D" id="3.40.50.720">
    <property type="entry name" value="NAD(P)-binding Rossmann-like Domain"/>
    <property type="match status" value="1"/>
</dbReference>
<dbReference type="HAMAP" id="MF_01412">
    <property type="entry name" value="K_H_efflux_KefB"/>
    <property type="match status" value="1"/>
</dbReference>
<dbReference type="InterPro" id="IPR006153">
    <property type="entry name" value="Cation/H_exchanger_TM"/>
</dbReference>
<dbReference type="InterPro" id="IPR004771">
    <property type="entry name" value="K/H_exchanger"/>
</dbReference>
<dbReference type="InterPro" id="IPR020884">
    <property type="entry name" value="K_H_efflux_KefB"/>
</dbReference>
<dbReference type="InterPro" id="IPR038770">
    <property type="entry name" value="Na+/solute_symporter_sf"/>
</dbReference>
<dbReference type="InterPro" id="IPR036291">
    <property type="entry name" value="NAD(P)-bd_dom_sf"/>
</dbReference>
<dbReference type="InterPro" id="IPR003148">
    <property type="entry name" value="RCK_N"/>
</dbReference>
<dbReference type="NCBIfam" id="TIGR00932">
    <property type="entry name" value="2a37"/>
    <property type="match status" value="1"/>
</dbReference>
<dbReference type="NCBIfam" id="NF002973">
    <property type="entry name" value="PRK03659.1"/>
    <property type="match status" value="1"/>
</dbReference>
<dbReference type="PANTHER" id="PTHR46157">
    <property type="entry name" value="K(+) EFFLUX ANTIPORTER 3, CHLOROPLASTIC"/>
    <property type="match status" value="1"/>
</dbReference>
<dbReference type="PANTHER" id="PTHR46157:SF4">
    <property type="entry name" value="K(+) EFFLUX ANTIPORTER 3, CHLOROPLASTIC"/>
    <property type="match status" value="1"/>
</dbReference>
<dbReference type="Pfam" id="PF00999">
    <property type="entry name" value="Na_H_Exchanger"/>
    <property type="match status" value="1"/>
</dbReference>
<dbReference type="Pfam" id="PF02254">
    <property type="entry name" value="TrkA_N"/>
    <property type="match status" value="1"/>
</dbReference>
<dbReference type="SUPFAM" id="SSF51735">
    <property type="entry name" value="NAD(P)-binding Rossmann-fold domains"/>
    <property type="match status" value="1"/>
</dbReference>
<dbReference type="PROSITE" id="PS51201">
    <property type="entry name" value="RCK_N"/>
    <property type="match status" value="1"/>
</dbReference>
<protein>
    <recommendedName>
        <fullName evidence="1">Glutathione-regulated potassium-efflux system protein KefB</fullName>
    </recommendedName>
    <alternativeName>
        <fullName evidence="1">K(+)/H(+) antiporter</fullName>
    </alternativeName>
</protein>
<name>KEFB_ECO24</name>
<gene>
    <name evidence="1" type="primary">kefB</name>
    <name type="ordered locus">EcE24377A_3820</name>
</gene>
<sequence>MEGSDFLLAGVLFLFAAVAAVPLASRLGIGAVLGYLLAGIAIGPWGLGFISDVDEILHFSELGVVFLMFIIGLELNPSKLWQLRRSIFGVGAAQVLLSAALLAGLLMLTDFAWQAAVVGGIGLAMSSTAMALQLMREKGMNRSESGQLGFSVLLFQDLAVIPALALVPLLAGSADEHFDWMKIGMKVLAFVGMLIGGRYLLRPVFRFIAASGVREVFTAATLLLVLGSALFMDALGLSMALGTFIAGVLLAESEYRHELETAIDPFKGLLLGLFFISVGMSLNLGVLYTHLLWVVISVVVLVAVKILVLYLLARLYGVRSSERMQFAGVLSQGGEFAFVLFSTASSQRLFQGDQMALLLVTVTLSMMTTPLLMKLVDKWLSRQFNGPEEEDEKPWVNDDKPQVIVVGFGRFGQVIGRLLMANKMRITVLERDISAVNLMRKYGYKVYYGDATQVDLLRSAGAEAAVSIVITCNEPEDTMKLVEICQQHFPHLHILARARGRVEAHELLQAGVTQFSRETFSSALELGRKTLVTLGMHPHQAQRAQLHFRRLDMRMLRELIPMHADTVQISRAREARRELEEIFQREMQQERRQLDGWDEFE</sequence>
<keyword id="KW-0050">Antiport</keyword>
<keyword id="KW-0997">Cell inner membrane</keyword>
<keyword id="KW-1003">Cell membrane</keyword>
<keyword id="KW-0406">Ion transport</keyword>
<keyword id="KW-0472">Membrane</keyword>
<keyword id="KW-0630">Potassium</keyword>
<keyword id="KW-0633">Potassium transport</keyword>
<keyword id="KW-1185">Reference proteome</keyword>
<keyword id="KW-0812">Transmembrane</keyword>
<keyword id="KW-1133">Transmembrane helix</keyword>
<keyword id="KW-0813">Transport</keyword>
<accession>A7ZSM6</accession>
<organism>
    <name type="scientific">Escherichia coli O139:H28 (strain E24377A / ETEC)</name>
    <dbReference type="NCBI Taxonomy" id="331111"/>
    <lineage>
        <taxon>Bacteria</taxon>
        <taxon>Pseudomonadati</taxon>
        <taxon>Pseudomonadota</taxon>
        <taxon>Gammaproteobacteria</taxon>
        <taxon>Enterobacterales</taxon>
        <taxon>Enterobacteriaceae</taxon>
        <taxon>Escherichia</taxon>
    </lineage>
</organism>
<proteinExistence type="inferred from homology"/>
<reference key="1">
    <citation type="journal article" date="2008" name="J. Bacteriol.">
        <title>The pangenome structure of Escherichia coli: comparative genomic analysis of E. coli commensal and pathogenic isolates.</title>
        <authorList>
            <person name="Rasko D.A."/>
            <person name="Rosovitz M.J."/>
            <person name="Myers G.S.A."/>
            <person name="Mongodin E.F."/>
            <person name="Fricke W.F."/>
            <person name="Gajer P."/>
            <person name="Crabtree J."/>
            <person name="Sebaihia M."/>
            <person name="Thomson N.R."/>
            <person name="Chaudhuri R."/>
            <person name="Henderson I.R."/>
            <person name="Sperandio V."/>
            <person name="Ravel J."/>
        </authorList>
    </citation>
    <scope>NUCLEOTIDE SEQUENCE [LARGE SCALE GENOMIC DNA]</scope>
    <source>
        <strain>E24377A / ETEC</strain>
    </source>
</reference>